<proteinExistence type="inferred from homology"/>
<feature type="chain" id="PRO_0000303428" description="tRNA N6-adenosine threonylcarbamoyltransferase">
    <location>
        <begin position="1"/>
        <end position="341"/>
    </location>
</feature>
<feature type="binding site" evidence="1">
    <location>
        <position position="114"/>
    </location>
    <ligand>
        <name>Fe cation</name>
        <dbReference type="ChEBI" id="CHEBI:24875"/>
    </ligand>
</feature>
<feature type="binding site" evidence="1">
    <location>
        <position position="118"/>
    </location>
    <ligand>
        <name>Fe cation</name>
        <dbReference type="ChEBI" id="CHEBI:24875"/>
    </ligand>
</feature>
<feature type="binding site" evidence="1">
    <location>
        <begin position="136"/>
        <end position="140"/>
    </location>
    <ligand>
        <name>substrate</name>
    </ligand>
</feature>
<feature type="binding site" evidence="1">
    <location>
        <position position="170"/>
    </location>
    <ligand>
        <name>substrate</name>
    </ligand>
</feature>
<feature type="binding site" evidence="1">
    <location>
        <position position="183"/>
    </location>
    <ligand>
        <name>substrate</name>
    </ligand>
</feature>
<feature type="binding site" evidence="1">
    <location>
        <position position="187"/>
    </location>
    <ligand>
        <name>substrate</name>
    </ligand>
</feature>
<feature type="binding site" evidence="1">
    <location>
        <position position="275"/>
    </location>
    <ligand>
        <name>substrate</name>
    </ligand>
</feature>
<feature type="binding site" evidence="1">
    <location>
        <position position="303"/>
    </location>
    <ligand>
        <name>Fe cation</name>
        <dbReference type="ChEBI" id="CHEBI:24875"/>
    </ligand>
</feature>
<evidence type="ECO:0000255" key="1">
    <source>
        <dbReference type="HAMAP-Rule" id="MF_01445"/>
    </source>
</evidence>
<sequence length="341" mass="34723">MTTILAIETSCDETGVGIARLDADGAVTLLADEVASSVDEHVRFGGVVPEIASRAHLEALGPTMRRALSAAGVTKPDVVAATIGPGLAGALLVGVAAAKAYSAAWGVPFYAVNHLGGHLAADVYQHGPLPECVALLVSGGHTHLLQVRSLGDPIVELGSTVDDAAGEAYDKVARLLGLGYPGGRVLDELARTGDREAIVFPRGMTGPRDAPYAFSFSGLKTAVARYLESHPDAVNADVAAGFQEAVADVLTRKAVRAATDLGVTTLLIAGGVAANSRLRELAEQRCAAAGLTLRIPRPGLCTDNGAMIASFAAHLVAAGAPPSPLDVPTDPGLPVVKAQVS</sequence>
<dbReference type="EC" id="2.3.1.234" evidence="1"/>
<dbReference type="EMBL" id="CP000479">
    <property type="protein sequence ID" value="ABK67578.1"/>
    <property type="molecule type" value="Genomic_DNA"/>
</dbReference>
<dbReference type="RefSeq" id="WP_003879516.1">
    <property type="nucleotide sequence ID" value="NC_008595.1"/>
</dbReference>
<dbReference type="SMR" id="A0QKR4"/>
<dbReference type="KEGG" id="mav:MAV_4367"/>
<dbReference type="HOGENOM" id="CLU_023208_0_2_11"/>
<dbReference type="Proteomes" id="UP000001574">
    <property type="component" value="Chromosome"/>
</dbReference>
<dbReference type="GO" id="GO:0005737">
    <property type="term" value="C:cytoplasm"/>
    <property type="evidence" value="ECO:0007669"/>
    <property type="project" value="UniProtKB-SubCell"/>
</dbReference>
<dbReference type="GO" id="GO:0005506">
    <property type="term" value="F:iron ion binding"/>
    <property type="evidence" value="ECO:0007669"/>
    <property type="project" value="UniProtKB-UniRule"/>
</dbReference>
<dbReference type="GO" id="GO:0061711">
    <property type="term" value="F:N(6)-L-threonylcarbamoyladenine synthase activity"/>
    <property type="evidence" value="ECO:0007669"/>
    <property type="project" value="UniProtKB-EC"/>
</dbReference>
<dbReference type="GO" id="GO:0002949">
    <property type="term" value="P:tRNA threonylcarbamoyladenosine modification"/>
    <property type="evidence" value="ECO:0007669"/>
    <property type="project" value="UniProtKB-UniRule"/>
</dbReference>
<dbReference type="CDD" id="cd24133">
    <property type="entry name" value="ASKHA_NBD_TsaD_bac"/>
    <property type="match status" value="1"/>
</dbReference>
<dbReference type="FunFam" id="3.30.420.40:FF:000012">
    <property type="entry name" value="tRNA N6-adenosine threonylcarbamoyltransferase"/>
    <property type="match status" value="1"/>
</dbReference>
<dbReference type="FunFam" id="3.30.420.40:FF:000040">
    <property type="entry name" value="tRNA N6-adenosine threonylcarbamoyltransferase"/>
    <property type="match status" value="1"/>
</dbReference>
<dbReference type="Gene3D" id="3.30.420.40">
    <property type="match status" value="2"/>
</dbReference>
<dbReference type="HAMAP" id="MF_01445">
    <property type="entry name" value="TsaD"/>
    <property type="match status" value="1"/>
</dbReference>
<dbReference type="InterPro" id="IPR043129">
    <property type="entry name" value="ATPase_NBD"/>
</dbReference>
<dbReference type="InterPro" id="IPR000905">
    <property type="entry name" value="Gcp-like_dom"/>
</dbReference>
<dbReference type="InterPro" id="IPR017861">
    <property type="entry name" value="KAE1/TsaD"/>
</dbReference>
<dbReference type="InterPro" id="IPR017860">
    <property type="entry name" value="Peptidase_M22_CS"/>
</dbReference>
<dbReference type="InterPro" id="IPR022450">
    <property type="entry name" value="TsaD"/>
</dbReference>
<dbReference type="NCBIfam" id="TIGR00329">
    <property type="entry name" value="gcp_kae1"/>
    <property type="match status" value="1"/>
</dbReference>
<dbReference type="NCBIfam" id="TIGR03723">
    <property type="entry name" value="T6A_TsaD_YgjD"/>
    <property type="match status" value="1"/>
</dbReference>
<dbReference type="PANTHER" id="PTHR11735">
    <property type="entry name" value="TRNA N6-ADENOSINE THREONYLCARBAMOYLTRANSFERASE"/>
    <property type="match status" value="1"/>
</dbReference>
<dbReference type="PANTHER" id="PTHR11735:SF6">
    <property type="entry name" value="TRNA N6-ADENOSINE THREONYLCARBAMOYLTRANSFERASE, MITOCHONDRIAL"/>
    <property type="match status" value="1"/>
</dbReference>
<dbReference type="Pfam" id="PF00814">
    <property type="entry name" value="TsaD"/>
    <property type="match status" value="1"/>
</dbReference>
<dbReference type="PRINTS" id="PR00789">
    <property type="entry name" value="OSIALOPTASE"/>
</dbReference>
<dbReference type="SUPFAM" id="SSF53067">
    <property type="entry name" value="Actin-like ATPase domain"/>
    <property type="match status" value="2"/>
</dbReference>
<dbReference type="PROSITE" id="PS01016">
    <property type="entry name" value="GLYCOPROTEASE"/>
    <property type="match status" value="1"/>
</dbReference>
<protein>
    <recommendedName>
        <fullName evidence="1">tRNA N6-adenosine threonylcarbamoyltransferase</fullName>
        <ecNumber evidence="1">2.3.1.234</ecNumber>
    </recommendedName>
    <alternativeName>
        <fullName evidence="1">N6-L-threonylcarbamoyladenine synthase</fullName>
        <shortName evidence="1">t(6)A synthase</shortName>
    </alternativeName>
    <alternativeName>
        <fullName evidence="1">t(6)A37 threonylcarbamoyladenosine biosynthesis protein TsaD</fullName>
    </alternativeName>
    <alternativeName>
        <fullName evidence="1">tRNA threonylcarbamoyladenosine biosynthesis protein TsaD</fullName>
    </alternativeName>
</protein>
<name>TSAD_MYCA1</name>
<keyword id="KW-0012">Acyltransferase</keyword>
<keyword id="KW-0963">Cytoplasm</keyword>
<keyword id="KW-0408">Iron</keyword>
<keyword id="KW-0479">Metal-binding</keyword>
<keyword id="KW-0808">Transferase</keyword>
<keyword id="KW-0819">tRNA processing</keyword>
<organism>
    <name type="scientific">Mycobacterium avium (strain 104)</name>
    <dbReference type="NCBI Taxonomy" id="243243"/>
    <lineage>
        <taxon>Bacteria</taxon>
        <taxon>Bacillati</taxon>
        <taxon>Actinomycetota</taxon>
        <taxon>Actinomycetes</taxon>
        <taxon>Mycobacteriales</taxon>
        <taxon>Mycobacteriaceae</taxon>
        <taxon>Mycobacterium</taxon>
        <taxon>Mycobacterium avium complex (MAC)</taxon>
    </lineage>
</organism>
<gene>
    <name evidence="1" type="primary">tsaD</name>
    <name type="synonym">gcp</name>
    <name type="ordered locus">MAV_4367</name>
</gene>
<comment type="function">
    <text evidence="1">Required for the formation of a threonylcarbamoyl group on adenosine at position 37 (t(6)A37) in tRNAs that read codons beginning with adenine. Is involved in the transfer of the threonylcarbamoyl moiety of threonylcarbamoyl-AMP (TC-AMP) to the N6 group of A37, together with TsaE and TsaB. TsaD likely plays a direct catalytic role in this reaction.</text>
</comment>
<comment type="catalytic activity">
    <reaction evidence="1">
        <text>L-threonylcarbamoyladenylate + adenosine(37) in tRNA = N(6)-L-threonylcarbamoyladenosine(37) in tRNA + AMP + H(+)</text>
        <dbReference type="Rhea" id="RHEA:37059"/>
        <dbReference type="Rhea" id="RHEA-COMP:10162"/>
        <dbReference type="Rhea" id="RHEA-COMP:10163"/>
        <dbReference type="ChEBI" id="CHEBI:15378"/>
        <dbReference type="ChEBI" id="CHEBI:73682"/>
        <dbReference type="ChEBI" id="CHEBI:74411"/>
        <dbReference type="ChEBI" id="CHEBI:74418"/>
        <dbReference type="ChEBI" id="CHEBI:456215"/>
        <dbReference type="EC" id="2.3.1.234"/>
    </reaction>
</comment>
<comment type="cofactor">
    <cofactor evidence="1">
        <name>Fe(2+)</name>
        <dbReference type="ChEBI" id="CHEBI:29033"/>
    </cofactor>
    <text evidence="1">Binds 1 Fe(2+) ion per subunit.</text>
</comment>
<comment type="subcellular location">
    <subcellularLocation>
        <location evidence="1">Cytoplasm</location>
    </subcellularLocation>
</comment>
<comment type="similarity">
    <text evidence="1">Belongs to the KAE1 / TsaD family.</text>
</comment>
<reference key="1">
    <citation type="submission" date="2006-10" db="EMBL/GenBank/DDBJ databases">
        <authorList>
            <person name="Fleischmann R.D."/>
            <person name="Dodson R.J."/>
            <person name="Haft D.H."/>
            <person name="Merkel J.S."/>
            <person name="Nelson W.C."/>
            <person name="Fraser C.M."/>
        </authorList>
    </citation>
    <scope>NUCLEOTIDE SEQUENCE [LARGE SCALE GENOMIC DNA]</scope>
    <source>
        <strain>104</strain>
    </source>
</reference>
<accession>A0QKR4</accession>